<proteinExistence type="evidence at transcript level"/>
<organism>
    <name type="scientific">Anoplopoma fimbria</name>
    <name type="common">Sablefish</name>
    <dbReference type="NCBI Taxonomy" id="229290"/>
    <lineage>
        <taxon>Eukaryota</taxon>
        <taxon>Metazoa</taxon>
        <taxon>Chordata</taxon>
        <taxon>Craniata</taxon>
        <taxon>Vertebrata</taxon>
        <taxon>Euteleostomi</taxon>
        <taxon>Actinopterygii</taxon>
        <taxon>Neopterygii</taxon>
        <taxon>Teleostei</taxon>
        <taxon>Neoteleostei</taxon>
        <taxon>Acanthomorphata</taxon>
        <taxon>Eupercaria</taxon>
        <taxon>Perciformes</taxon>
        <taxon>Cottioidei</taxon>
        <taxon>Anoplopomatales</taxon>
        <taxon>Anoplopomatidae</taxon>
        <taxon>Anoplopoma</taxon>
    </lineage>
</organism>
<accession>C3KHF2</accession>
<evidence type="ECO:0000250" key="1">
    <source>
        <dbReference type="UniProtKB" id="P11441"/>
    </source>
</evidence>
<evidence type="ECO:0000255" key="2">
    <source>
        <dbReference type="PROSITE-ProRule" id="PRU00214"/>
    </source>
</evidence>
<name>UBL4A_ANOFI</name>
<dbReference type="EMBL" id="BT082367">
    <property type="protein sequence ID" value="ACQ58074.1"/>
    <property type="molecule type" value="mRNA"/>
</dbReference>
<dbReference type="RefSeq" id="XP_054467083.1">
    <property type="nucleotide sequence ID" value="XM_054611108.1"/>
</dbReference>
<dbReference type="SMR" id="C3KHF2"/>
<dbReference type="GeneID" id="129101332"/>
<dbReference type="OrthoDB" id="417450at2759"/>
<dbReference type="GO" id="GO:0071818">
    <property type="term" value="C:BAT3 complex"/>
    <property type="evidence" value="ECO:0000250"/>
    <property type="project" value="UniProtKB"/>
</dbReference>
<dbReference type="GO" id="GO:0005829">
    <property type="term" value="C:cytosol"/>
    <property type="evidence" value="ECO:0000250"/>
    <property type="project" value="UniProtKB"/>
</dbReference>
<dbReference type="GO" id="GO:0005634">
    <property type="term" value="C:nucleus"/>
    <property type="evidence" value="ECO:0007669"/>
    <property type="project" value="UniProtKB-SubCell"/>
</dbReference>
<dbReference type="GO" id="GO:0051087">
    <property type="term" value="F:protein-folding chaperone binding"/>
    <property type="evidence" value="ECO:0007669"/>
    <property type="project" value="TreeGrafter"/>
</dbReference>
<dbReference type="GO" id="GO:0006620">
    <property type="term" value="P:post-translational protein targeting to endoplasmic reticulum membrane"/>
    <property type="evidence" value="ECO:0007669"/>
    <property type="project" value="InterPro"/>
</dbReference>
<dbReference type="GO" id="GO:0071816">
    <property type="term" value="P:tail-anchored membrane protein insertion into ER membrane"/>
    <property type="evidence" value="ECO:0000250"/>
    <property type="project" value="UniProtKB"/>
</dbReference>
<dbReference type="CDD" id="cd01807">
    <property type="entry name" value="Ubl_UBL4A_like"/>
    <property type="match status" value="1"/>
</dbReference>
<dbReference type="FunFam" id="3.10.20.90:FF:000144">
    <property type="entry name" value="Ubiquitin-like protein 4A"/>
    <property type="match status" value="1"/>
</dbReference>
<dbReference type="Gene3D" id="3.10.20.90">
    <property type="entry name" value="Phosphatidylinositol 3-kinase Catalytic Subunit, Chain A, domain 1"/>
    <property type="match status" value="1"/>
</dbReference>
<dbReference type="InterPro" id="IPR000626">
    <property type="entry name" value="Ubiquitin-like_dom"/>
</dbReference>
<dbReference type="InterPro" id="IPR029071">
    <property type="entry name" value="Ubiquitin-like_domsf"/>
</dbReference>
<dbReference type="InterPro" id="IPR019954">
    <property type="entry name" value="Ubiquitin_CS"/>
</dbReference>
<dbReference type="InterPro" id="IPR019956">
    <property type="entry name" value="Ubiquitin_dom"/>
</dbReference>
<dbReference type="InterPro" id="IPR041421">
    <property type="entry name" value="Ubl4_C_TUGS"/>
</dbReference>
<dbReference type="InterPro" id="IPR047154">
    <property type="entry name" value="UBL4A-like"/>
</dbReference>
<dbReference type="InterPro" id="IPR044724">
    <property type="entry name" value="Ubl_UBL4A-like"/>
</dbReference>
<dbReference type="PANTHER" id="PTHR46555">
    <property type="entry name" value="UBIQUITIN-LIKE PROTEIN 4A"/>
    <property type="match status" value="1"/>
</dbReference>
<dbReference type="PANTHER" id="PTHR46555:SF1">
    <property type="entry name" value="UBIQUITIN-LIKE PROTEIN 4A"/>
    <property type="match status" value="1"/>
</dbReference>
<dbReference type="Pfam" id="PF17840">
    <property type="entry name" value="Tugs"/>
    <property type="match status" value="1"/>
</dbReference>
<dbReference type="Pfam" id="PF00240">
    <property type="entry name" value="ubiquitin"/>
    <property type="match status" value="1"/>
</dbReference>
<dbReference type="PRINTS" id="PR00348">
    <property type="entry name" value="UBIQUITIN"/>
</dbReference>
<dbReference type="SMART" id="SM00213">
    <property type="entry name" value="UBQ"/>
    <property type="match status" value="1"/>
</dbReference>
<dbReference type="SUPFAM" id="SSF54236">
    <property type="entry name" value="Ubiquitin-like"/>
    <property type="match status" value="1"/>
</dbReference>
<dbReference type="PROSITE" id="PS00299">
    <property type="entry name" value="UBIQUITIN_1"/>
    <property type="match status" value="1"/>
</dbReference>
<dbReference type="PROSITE" id="PS50053">
    <property type="entry name" value="UBIQUITIN_2"/>
    <property type="match status" value="1"/>
</dbReference>
<sequence length="156" mass="17219">MILTVKPLQGKECSVQVTEDEKVSTVKELVSERLNIPANQQRLLYKGKALSDEHRLSDYSIGPEAKLNLVIRPVGERTGASGTAASSSSSSQGRVWQTVSTILARHFSPADAAKVHEQLIKDYERSLRQLSLDDIERLAGRLLHPDGEGMDTSYMD</sequence>
<comment type="function">
    <text evidence="1">As part of a cytosolic protein quality control complex, the bag6/bat3 complex, maintains misfolded and hydrophobic patches-containing proteins in a soluble state and participates in their proper delivery to the endoplasmic reticulum or alternatively can promote their sorting to the proteasome where they undergo degradation. The bag6/bat3 complex is involved in the post-translational delivery of tail-anchored/type II transmembrane proteins to the endoplasmic reticulum membrane. Similarly, the bag6/bat3 complex also functions as a sorting platform for proteins of the secretory pathway that are mislocalized to the cytosol either delivering them to the proteasome for degradation or to the endoplasmic reticulum. The bag6/bat3 complex also plays a role in the endoplasmic reticulum-associated degradation (ERAD), a quality control mechanism that eliminates unwanted proteins of the endoplasmic reticulum through their retrotranslocation to the cytosol and their targeting to the proteasome. It maintains these retrotranslocated proteins in an unfolded yet soluble state condition in the cytosol to ensure their proper delivery to the proteasome.</text>
</comment>
<comment type="subunit">
    <text evidence="1">Component of the bag6/bat3 complex.</text>
</comment>
<comment type="subcellular location">
    <subcellularLocation>
        <location evidence="1">Cytoplasm</location>
        <location evidence="1">Cytosol</location>
    </subcellularLocation>
    <subcellularLocation>
        <location evidence="1">Nucleus</location>
    </subcellularLocation>
</comment>
<keyword id="KW-0963">Cytoplasm</keyword>
<keyword id="KW-0539">Nucleus</keyword>
<keyword id="KW-0813">Transport</keyword>
<protein>
    <recommendedName>
        <fullName>Ubiquitin-like protein 4A</fullName>
    </recommendedName>
</protein>
<gene>
    <name type="primary">ubl4a</name>
</gene>
<reference key="1">
    <citation type="submission" date="2009-05" db="EMBL/GenBank/DDBJ databases">
        <title>Anoplopoma fimbria ESTs and full-length cDNAs.</title>
        <authorList>
            <person name="Messmer A."/>
            <person name="Rondeau E."/>
            <person name="Sanderson D."/>
            <person name="Cooper G."/>
            <person name="Leong J."/>
            <person name="Koop B.F."/>
        </authorList>
    </citation>
    <scope>NUCLEOTIDE SEQUENCE [LARGE SCALE MRNA]</scope>
    <source>
        <tissue>Brain</tissue>
    </source>
</reference>
<feature type="chain" id="PRO_0000403741" description="Ubiquitin-like protein 4A">
    <location>
        <begin position="1"/>
        <end position="156"/>
    </location>
</feature>
<feature type="domain" description="Ubiquitin-like" evidence="2">
    <location>
        <begin position="1"/>
        <end position="76"/>
    </location>
</feature>